<reference key="1">
    <citation type="journal article" date="1995" name="Gene">
        <title>Characterization and overexpression of the gene encoding Staphylococcus aureus DNA polymerase III.</title>
        <authorList>
            <person name="Pacitti D.F."/>
            <person name="Barnes M.H."/>
            <person name="Li D."/>
            <person name="Brown N.C."/>
        </authorList>
    </citation>
    <scope>NUCLEOTIDE SEQUENCE [GENOMIC DNA]</scope>
    <source>
        <strain>IP8</strain>
    </source>
</reference>
<proteinExistence type="inferred from homology"/>
<keyword id="KW-0963">Cytoplasm</keyword>
<keyword id="KW-0235">DNA replication</keyword>
<keyword id="KW-0239">DNA-directed DNA polymerase</keyword>
<keyword id="KW-0269">Exonuclease</keyword>
<keyword id="KW-0378">Hydrolase</keyword>
<keyword id="KW-0540">Nuclease</keyword>
<keyword id="KW-0548">Nucleotidyltransferase</keyword>
<keyword id="KW-0808">Transferase</keyword>
<evidence type="ECO:0000255" key="1">
    <source>
        <dbReference type="HAMAP-Rule" id="MF_00356"/>
    </source>
</evidence>
<accession>P0C1P9</accession>
<accession>P68851</accession>
<accession>Q53665</accession>
<accession>Q57110</accession>
<accession>Q9F1J9</accession>
<gene>
    <name evidence="1" type="primary">polC</name>
</gene>
<protein>
    <recommendedName>
        <fullName evidence="1">DNA polymerase III PolC-type</fullName>
        <shortName evidence="1">PolIII</shortName>
        <ecNumber evidence="1">2.7.7.7</ecNumber>
    </recommendedName>
</protein>
<organism>
    <name type="scientific">Staphylococcus aureus</name>
    <dbReference type="NCBI Taxonomy" id="1280"/>
    <lineage>
        <taxon>Bacteria</taxon>
        <taxon>Bacillati</taxon>
        <taxon>Bacillota</taxon>
        <taxon>Bacilli</taxon>
        <taxon>Bacillales</taxon>
        <taxon>Staphylococcaceae</taxon>
        <taxon>Staphylococcus</taxon>
    </lineage>
</organism>
<name>DPO3_STAAU</name>
<dbReference type="EC" id="2.7.7.7" evidence="1"/>
<dbReference type="EMBL" id="D86727">
    <property type="protein sequence ID" value="BAA13160.1"/>
    <property type="molecule type" value="Genomic_DNA"/>
</dbReference>
<dbReference type="EMBL" id="Z48003">
    <property type="protein sequence ID" value="CAA88043.1"/>
    <property type="molecule type" value="Genomic_DNA"/>
</dbReference>
<dbReference type="PIR" id="S52267">
    <property type="entry name" value="S52267"/>
</dbReference>
<dbReference type="SMR" id="P0C1P9"/>
<dbReference type="BindingDB" id="P0C1P9"/>
<dbReference type="ChEMBL" id="CHEMBL4910"/>
<dbReference type="GO" id="GO:0005737">
    <property type="term" value="C:cytoplasm"/>
    <property type="evidence" value="ECO:0007669"/>
    <property type="project" value="UniProtKB-SubCell"/>
</dbReference>
<dbReference type="GO" id="GO:0008408">
    <property type="term" value="F:3'-5' exonuclease activity"/>
    <property type="evidence" value="ECO:0007669"/>
    <property type="project" value="UniProtKB-UniRule"/>
</dbReference>
<dbReference type="GO" id="GO:0003677">
    <property type="term" value="F:DNA binding"/>
    <property type="evidence" value="ECO:0007669"/>
    <property type="project" value="UniProtKB-UniRule"/>
</dbReference>
<dbReference type="GO" id="GO:0003887">
    <property type="term" value="F:DNA-directed DNA polymerase activity"/>
    <property type="evidence" value="ECO:0007669"/>
    <property type="project" value="UniProtKB-UniRule"/>
</dbReference>
<dbReference type="GO" id="GO:0006261">
    <property type="term" value="P:DNA-templated DNA replication"/>
    <property type="evidence" value="ECO:0007669"/>
    <property type="project" value="UniProtKB-UniRule"/>
</dbReference>
<dbReference type="CDD" id="cd06127">
    <property type="entry name" value="DEDDh"/>
    <property type="match status" value="1"/>
</dbReference>
<dbReference type="CDD" id="cd07435">
    <property type="entry name" value="PHP_PolIIIA_POLC"/>
    <property type="match status" value="1"/>
</dbReference>
<dbReference type="CDD" id="cd04484">
    <property type="entry name" value="polC_OBF"/>
    <property type="match status" value="1"/>
</dbReference>
<dbReference type="FunFam" id="3.30.420.10:FF:000045">
    <property type="entry name" value="3'-5' exonuclease DinG"/>
    <property type="match status" value="1"/>
</dbReference>
<dbReference type="Gene3D" id="1.10.150.870">
    <property type="match status" value="1"/>
</dbReference>
<dbReference type="Gene3D" id="3.30.1900.20">
    <property type="match status" value="2"/>
</dbReference>
<dbReference type="Gene3D" id="6.10.140.1510">
    <property type="match status" value="1"/>
</dbReference>
<dbReference type="Gene3D" id="3.20.20.140">
    <property type="entry name" value="Metal-dependent hydrolases"/>
    <property type="match status" value="1"/>
</dbReference>
<dbReference type="Gene3D" id="2.40.50.140">
    <property type="entry name" value="Nucleic acid-binding proteins"/>
    <property type="match status" value="1"/>
</dbReference>
<dbReference type="Gene3D" id="1.10.150.700">
    <property type="entry name" value="PolC, middle finger domain"/>
    <property type="match status" value="1"/>
</dbReference>
<dbReference type="Gene3D" id="3.30.420.10">
    <property type="entry name" value="Ribonuclease H-like superfamily/Ribonuclease H"/>
    <property type="match status" value="1"/>
</dbReference>
<dbReference type="HAMAP" id="MF_00356">
    <property type="entry name" value="DNApol_PolC"/>
    <property type="match status" value="1"/>
</dbReference>
<dbReference type="InterPro" id="IPR011708">
    <property type="entry name" value="DNA_pol3_alpha_NTPase_dom"/>
</dbReference>
<dbReference type="InterPro" id="IPR040982">
    <property type="entry name" value="DNA_pol3_finger"/>
</dbReference>
<dbReference type="InterPro" id="IPR024754">
    <property type="entry name" value="DNA_PolC-like_N_II"/>
</dbReference>
<dbReference type="InterPro" id="IPR028112">
    <property type="entry name" value="DNA_PolC-type_N_I"/>
</dbReference>
<dbReference type="InterPro" id="IPR004805">
    <property type="entry name" value="DnaE2/DnaE/PolC"/>
</dbReference>
<dbReference type="InterPro" id="IPR029460">
    <property type="entry name" value="DNAPol_HHH"/>
</dbReference>
<dbReference type="InterPro" id="IPR006054">
    <property type="entry name" value="DnaQ"/>
</dbReference>
<dbReference type="InterPro" id="IPR013520">
    <property type="entry name" value="Exonuclease_RNaseT/DNA_pol3"/>
</dbReference>
<dbReference type="InterPro" id="IPR012340">
    <property type="entry name" value="NA-bd_OB-fold"/>
</dbReference>
<dbReference type="InterPro" id="IPR004013">
    <property type="entry name" value="PHP_dom"/>
</dbReference>
<dbReference type="InterPro" id="IPR003141">
    <property type="entry name" value="Pol/His_phosphatase_N"/>
</dbReference>
<dbReference type="InterPro" id="IPR006308">
    <property type="entry name" value="Pol_III_a_PolC-type_gram_pos"/>
</dbReference>
<dbReference type="InterPro" id="IPR044923">
    <property type="entry name" value="PolC_middle_finger_sf"/>
</dbReference>
<dbReference type="InterPro" id="IPR012337">
    <property type="entry name" value="RNaseH-like_sf"/>
</dbReference>
<dbReference type="InterPro" id="IPR036397">
    <property type="entry name" value="RNaseH_sf"/>
</dbReference>
<dbReference type="NCBIfam" id="TIGR00573">
    <property type="entry name" value="dnaq"/>
    <property type="match status" value="1"/>
</dbReference>
<dbReference type="NCBIfam" id="TIGR01405">
    <property type="entry name" value="polC_Gram_pos"/>
    <property type="match status" value="1"/>
</dbReference>
<dbReference type="NCBIfam" id="NF001688">
    <property type="entry name" value="PRK00448.1"/>
    <property type="match status" value="1"/>
</dbReference>
<dbReference type="PANTHER" id="PTHR32294:SF5">
    <property type="entry name" value="DNA POLYMERASE III POLC-TYPE"/>
    <property type="match status" value="1"/>
</dbReference>
<dbReference type="PANTHER" id="PTHR32294">
    <property type="entry name" value="DNA POLYMERASE III SUBUNIT ALPHA"/>
    <property type="match status" value="1"/>
</dbReference>
<dbReference type="Pfam" id="PF14480">
    <property type="entry name" value="DNA_pol3_a_NI"/>
    <property type="match status" value="1"/>
</dbReference>
<dbReference type="Pfam" id="PF11490">
    <property type="entry name" value="DNA_pol3_a_NII"/>
    <property type="match status" value="1"/>
</dbReference>
<dbReference type="Pfam" id="PF07733">
    <property type="entry name" value="DNA_pol3_alpha"/>
    <property type="match status" value="2"/>
</dbReference>
<dbReference type="Pfam" id="PF17657">
    <property type="entry name" value="DNA_pol3_finger"/>
    <property type="match status" value="1"/>
</dbReference>
<dbReference type="Pfam" id="PF14579">
    <property type="entry name" value="HHH_6"/>
    <property type="match status" value="1"/>
</dbReference>
<dbReference type="Pfam" id="PF02811">
    <property type="entry name" value="PHP"/>
    <property type="match status" value="2"/>
</dbReference>
<dbReference type="Pfam" id="PF00929">
    <property type="entry name" value="RNase_T"/>
    <property type="match status" value="1"/>
</dbReference>
<dbReference type="SMART" id="SM00479">
    <property type="entry name" value="EXOIII"/>
    <property type="match status" value="1"/>
</dbReference>
<dbReference type="SMART" id="SM00481">
    <property type="entry name" value="POLIIIAc"/>
    <property type="match status" value="1"/>
</dbReference>
<dbReference type="SUPFAM" id="SSF81585">
    <property type="entry name" value="PsbU/PolX domain-like"/>
    <property type="match status" value="1"/>
</dbReference>
<dbReference type="SUPFAM" id="SSF53098">
    <property type="entry name" value="Ribonuclease H-like"/>
    <property type="match status" value="1"/>
</dbReference>
<sequence>MTEQQKFKVLADQIKISNQLDAEILNSGELTRIDVSNKNRTWEFHITLPQFLAHEDYLLFINAIEQEFKDIANVTCRFTVTNGTNQDEHAIKYFGHCIDQTALSPKVKGQLKQKKLIMSGKVLKVMVSNDIERNHFDKACNGSLIKAFRNCGFDIDKIIFETNDNDQEQNLASLEAHIQEEDEQSARLATEKLEKMKAEKAKQQDNKQSAVDKCQIGKPIQIENIKPIESIIEEEFKVAIEGVIFDINLKELKSGRHIVEIKVTDYTDSLVLKMFTRKNKDDLEHFKALSVGKWVRAQGRIEEDTFIRDLVMMMSDIEEIKKATKKDKAEEKRVEFHLHTAMSQMDGIPNIGAYVKQAADWGHPAIAVTDHNVVQAFPDAHAAAEKHGIKMIYGMEGMLVDDGVPIAYKPQDVVLKDATYVVFDVETTGLSNQYDKIIELAAVKVHNGEIIDKFERFSNPHERLSETIINLTHITDDMLVDAPEIEEVLTEFKEWVGDAIFVAHNASFDMGFIDTGYERLGFGPSTNGVIDTLELSRTINTEYGKHGLNFLAKKYGVELTQHHRAIYDTEATAYIFIKMVQQMKELGVLNHNEINKKLSNEDAYKRARPSHVTLIVQNQQGLKNLFKIVSASLVKYFYRTPRIPRSLLDEYREGLLVGTACDEGELFTAVMQKDQSQVEKIAKYYDFIEIQPPALYQDLIDRELIRDTETLHEIYQRLIHAGDTAGIPVIATGNAHYLFEHDGIARKILIASQPGNPLNRSTLPEAHFRTTDEMLNEFHFLGEEKAHEIVVKNTNELADRIERVVPIKDELYTPRMEGANEEIRELSYANARKLYGEDLPQIVIDRLEKELKSIIGNGFAVIYLISQRLVKKSLDDGYLVGSRGSVGSSFVATMTEITEVNPLPPHYICPNCKTSEFFNDGSVGSGFDLPDKTCETCGAPLIKEGQDIPFEKFLGFKGDKVPDIDLNFSGEYQPNAHNYTKVLFGEDKVFRAGTIGTVAEKTAFGYVKGYLNDQGIHKRGAEIDRLVKGCTGVKATTGQHPGGIIVVPDYMDIYDFTPIQYPADDQNSAWMTTHFDFHSIHDNVLKLDILGHDDPTMIRMLQDLSGIDPKTIPVDDKEVMQIFSTPESLGVTEDEILCKTGTFGVPNSDRIRRQMLEDTKPTTFSELVQISGLSHGTDVWLGNAQELIKTGICDLSSVIGCRDDIMVYLMYAGLEPSMAFKIMESVRKGKGLTEEMIETMKENEVPDWYLDSCLKIKYIFPKAHAAAYVLMAVRIAYFKVHHPLYYYASYFTIRASDFDLITMIKDKTSIRNTVKDMYSRYMDLGKKEKDVLTVLEIMNEMAHRGYRMQPISLEKSQAFEFIIEGDTLIPPFISVPGLGENVAKRIVEARDDGPFLSKEDLNKKAGLYQKIIEYLDELGSLPNLPDKAQLSIFDM</sequence>
<feature type="chain" id="PRO_0000204591" description="DNA polymerase III PolC-type">
    <location>
        <begin position="1"/>
        <end position="1435"/>
    </location>
</feature>
<feature type="domain" description="Exonuclease">
    <location>
        <begin position="420"/>
        <end position="576"/>
    </location>
</feature>
<comment type="function">
    <text>Required for replicative DNA synthesis. This DNA polymerase also exhibits 3' to 5' exonuclease activity.</text>
</comment>
<comment type="catalytic activity">
    <reaction evidence="1">
        <text>DNA(n) + a 2'-deoxyribonucleoside 5'-triphosphate = DNA(n+1) + diphosphate</text>
        <dbReference type="Rhea" id="RHEA:22508"/>
        <dbReference type="Rhea" id="RHEA-COMP:17339"/>
        <dbReference type="Rhea" id="RHEA-COMP:17340"/>
        <dbReference type="ChEBI" id="CHEBI:33019"/>
        <dbReference type="ChEBI" id="CHEBI:61560"/>
        <dbReference type="ChEBI" id="CHEBI:173112"/>
        <dbReference type="EC" id="2.7.7.7"/>
    </reaction>
</comment>
<comment type="subcellular location">
    <subcellularLocation>
        <location evidence="1">Cytoplasm</location>
    </subcellularLocation>
</comment>
<comment type="similarity">
    <text evidence="1">Belongs to the DNA polymerase type-C family. PolC subfamily.</text>
</comment>